<protein>
    <recommendedName>
        <fullName>COMM domain-containing protein 3</fullName>
    </recommendedName>
</protein>
<keyword id="KW-0963">Cytoplasm</keyword>
<keyword id="KW-0406">Ion transport</keyword>
<keyword id="KW-0539">Nucleus</keyword>
<keyword id="KW-1185">Reference proteome</keyword>
<keyword id="KW-0915">Sodium</keyword>
<keyword id="KW-0739">Sodium transport</keyword>
<keyword id="KW-0804">Transcription</keyword>
<keyword id="KW-0805">Transcription regulation</keyword>
<keyword id="KW-0813">Transport</keyword>
<keyword id="KW-0833">Ubl conjugation pathway</keyword>
<comment type="function">
    <text evidence="1">Scaffold protein in the commander complex that is essential for endosomal recycling of transmembrane cargos; the commander complex is composed of the CCC subcomplex and the retriever subcomplex (By similarity). May modulate activity of cullin-RING E3 ubiquitin ligase (CRL) complexes (By similarity). May down-regulate activation of NF-kappa-B (By similarity). Modulates Na(+) transport in epithelial cells by regulation of apical cell surface expression of amiloride-sensitive sodium channel (ENaC) subunits (By similarity).</text>
</comment>
<comment type="subunit">
    <text evidence="1">Component of the commander complex consisting of the CCC subcomplex and the retriever subcomplex (By similarity). Component of the CCC (COMMD/CCDC22/CCDC93) subcomplex consisting of COMMD1, COMMD2, COMMD3, COMMD4, COMMD5, COMMD6, COMMD7, COMMD8, COMMD9, COMMD10, CCDC22 and CCDC93; within the complex forms a heterodimer with COMMD2 (By similarity). Interacts with NFKB1/p105 (By similarity). Interacts with CCDC22, CCDC93, SCNN1B, CUL3, CUL4A, CUL4B, CUL5 (By similarity).</text>
</comment>
<comment type="subcellular location">
    <subcellularLocation>
        <location evidence="1">Cytoplasm</location>
    </subcellularLocation>
    <subcellularLocation>
        <location evidence="1">Nucleus</location>
    </subcellularLocation>
</comment>
<comment type="similarity">
    <text evidence="3">Belongs to the COMM domain-containing protein 3 family.</text>
</comment>
<evidence type="ECO:0000250" key="1">
    <source>
        <dbReference type="UniProtKB" id="Q9UBI1"/>
    </source>
</evidence>
<evidence type="ECO:0000255" key="2">
    <source>
        <dbReference type="PROSITE-ProRule" id="PRU00602"/>
    </source>
</evidence>
<evidence type="ECO:0000305" key="3"/>
<name>COMD3_BOVIN</name>
<organism>
    <name type="scientific">Bos taurus</name>
    <name type="common">Bovine</name>
    <dbReference type="NCBI Taxonomy" id="9913"/>
    <lineage>
        <taxon>Eukaryota</taxon>
        <taxon>Metazoa</taxon>
        <taxon>Chordata</taxon>
        <taxon>Craniata</taxon>
        <taxon>Vertebrata</taxon>
        <taxon>Euteleostomi</taxon>
        <taxon>Mammalia</taxon>
        <taxon>Eutheria</taxon>
        <taxon>Laurasiatheria</taxon>
        <taxon>Artiodactyla</taxon>
        <taxon>Ruminantia</taxon>
        <taxon>Pecora</taxon>
        <taxon>Bovidae</taxon>
        <taxon>Bovinae</taxon>
        <taxon>Bos</taxon>
    </lineage>
</organism>
<sequence length="195" mass="22310">MELSEYVQKGFQMLADPGSFDSNTFTLLLRAAFQSLLDAQADEAVLDHPDLKHIDPVVLKHRHAAAATYILEAGKQRADRSTLSTYLEDCKFDSERIELFWTEYQNNRNSLEILLGSIGRSLPHITDVSWRLEYQIKTNQLDKMYRPAYLVTLNVENTDSRSHPEISFSCNMEQLQDLVGKLKDASKSLERATQL</sequence>
<reference key="1">
    <citation type="submission" date="2005-08" db="EMBL/GenBank/DDBJ databases">
        <authorList>
            <consortium name="NIH - Mammalian Gene Collection (MGC) project"/>
        </authorList>
    </citation>
    <scope>NUCLEOTIDE SEQUENCE [LARGE SCALE MRNA]</scope>
    <source>
        <strain>Crossbred X Angus</strain>
        <tissue>Ileum</tissue>
    </source>
</reference>
<accession>Q3SZ76</accession>
<feature type="chain" id="PRO_0000260182" description="COMM domain-containing protein 3">
    <location>
        <begin position="1"/>
        <end position="195"/>
    </location>
</feature>
<feature type="domain" description="COMM" evidence="2">
    <location>
        <begin position="124"/>
        <end position="193"/>
    </location>
</feature>
<gene>
    <name type="primary">COMMD3</name>
</gene>
<dbReference type="EMBL" id="BC103075">
    <property type="protein sequence ID" value="AAI03076.1"/>
    <property type="molecule type" value="mRNA"/>
</dbReference>
<dbReference type="RefSeq" id="NP_001070467.1">
    <property type="nucleotide sequence ID" value="NM_001076999.1"/>
</dbReference>
<dbReference type="SMR" id="Q3SZ76"/>
<dbReference type="FunCoup" id="Q3SZ76">
    <property type="interactions" value="1936"/>
</dbReference>
<dbReference type="STRING" id="9913.ENSBTAP00000004668"/>
<dbReference type="PaxDb" id="9913-ENSBTAP00000004668"/>
<dbReference type="GeneID" id="767926"/>
<dbReference type="KEGG" id="bta:767926"/>
<dbReference type="CTD" id="23412"/>
<dbReference type="eggNOG" id="ENOG502R79J">
    <property type="taxonomic scope" value="Eukaryota"/>
</dbReference>
<dbReference type="InParanoid" id="Q3SZ76"/>
<dbReference type="OrthoDB" id="1917519at2759"/>
<dbReference type="Proteomes" id="UP000009136">
    <property type="component" value="Unplaced"/>
</dbReference>
<dbReference type="GO" id="GO:0005737">
    <property type="term" value="C:cytoplasm"/>
    <property type="evidence" value="ECO:0007669"/>
    <property type="project" value="UniProtKB-SubCell"/>
</dbReference>
<dbReference type="GO" id="GO:0005634">
    <property type="term" value="C:nucleus"/>
    <property type="evidence" value="ECO:0007669"/>
    <property type="project" value="UniProtKB-SubCell"/>
</dbReference>
<dbReference type="GO" id="GO:0006814">
    <property type="term" value="P:sodium ion transport"/>
    <property type="evidence" value="ECO:0007669"/>
    <property type="project" value="UniProtKB-KW"/>
</dbReference>
<dbReference type="CDD" id="cd04751">
    <property type="entry name" value="Commd3"/>
    <property type="match status" value="1"/>
</dbReference>
<dbReference type="InterPro" id="IPR017920">
    <property type="entry name" value="COMM"/>
</dbReference>
<dbReference type="InterPro" id="IPR037355">
    <property type="entry name" value="COMMD3"/>
</dbReference>
<dbReference type="PANTHER" id="PTHR31159">
    <property type="entry name" value="COMM DOMAIN-CONTAINING PROTEIN 3"/>
    <property type="match status" value="1"/>
</dbReference>
<dbReference type="PANTHER" id="PTHR31159:SF1">
    <property type="entry name" value="COMM DOMAIN-CONTAINING PROTEIN 3"/>
    <property type="match status" value="1"/>
</dbReference>
<dbReference type="Pfam" id="PF07258">
    <property type="entry name" value="COMM_domain"/>
    <property type="match status" value="1"/>
</dbReference>
<dbReference type="Pfam" id="PF21672">
    <property type="entry name" value="COMM_HN"/>
    <property type="match status" value="1"/>
</dbReference>
<dbReference type="PROSITE" id="PS51269">
    <property type="entry name" value="COMM"/>
    <property type="match status" value="1"/>
</dbReference>
<proteinExistence type="evidence at transcript level"/>